<comment type="function">
    <text evidence="1">Catalyzes the reduction of hydroxylamine to form NH(3) and H(2)O.</text>
</comment>
<comment type="catalytic activity">
    <reaction evidence="1">
        <text>A + NH4(+) + H2O = hydroxylamine + AH2 + H(+)</text>
        <dbReference type="Rhea" id="RHEA:22052"/>
        <dbReference type="ChEBI" id="CHEBI:13193"/>
        <dbReference type="ChEBI" id="CHEBI:15377"/>
        <dbReference type="ChEBI" id="CHEBI:15378"/>
        <dbReference type="ChEBI" id="CHEBI:15429"/>
        <dbReference type="ChEBI" id="CHEBI:17499"/>
        <dbReference type="ChEBI" id="CHEBI:28938"/>
        <dbReference type="EC" id="1.7.99.1"/>
    </reaction>
</comment>
<comment type="cofactor">
    <cofactor evidence="1">
        <name>[2Fe-2S] cluster</name>
        <dbReference type="ChEBI" id="CHEBI:190135"/>
    </cofactor>
    <text evidence="1">Binds 1 [2Fe-2S] cluster.</text>
</comment>
<comment type="cofactor">
    <cofactor evidence="1">
        <name>hybrid [4Fe-2O-2S] cluster</name>
        <dbReference type="ChEBI" id="CHEBI:60519"/>
    </cofactor>
    <text evidence="1">Binds 1 hybrid [4Fe-2O-2S] cluster.</text>
</comment>
<comment type="subcellular location">
    <subcellularLocation>
        <location evidence="1">Cytoplasm</location>
    </subcellularLocation>
</comment>
<comment type="similarity">
    <text evidence="1">Belongs to the HCP family.</text>
</comment>
<accession>B4TCZ8</accession>
<evidence type="ECO:0000255" key="1">
    <source>
        <dbReference type="HAMAP-Rule" id="MF_00069"/>
    </source>
</evidence>
<proteinExistence type="inferred from homology"/>
<keyword id="KW-0001">2Fe-2S</keyword>
<keyword id="KW-0963">Cytoplasm</keyword>
<keyword id="KW-0408">Iron</keyword>
<keyword id="KW-0411">Iron-sulfur</keyword>
<keyword id="KW-0479">Metal-binding</keyword>
<keyword id="KW-0560">Oxidoreductase</keyword>
<reference key="1">
    <citation type="journal article" date="2011" name="J. Bacteriol.">
        <title>Comparative genomics of 28 Salmonella enterica isolates: evidence for CRISPR-mediated adaptive sublineage evolution.</title>
        <authorList>
            <person name="Fricke W.F."/>
            <person name="Mammel M.K."/>
            <person name="McDermott P.F."/>
            <person name="Tartera C."/>
            <person name="White D.G."/>
            <person name="Leclerc J.E."/>
            <person name="Ravel J."/>
            <person name="Cebula T.A."/>
        </authorList>
    </citation>
    <scope>NUCLEOTIDE SEQUENCE [LARGE SCALE GENOMIC DNA]</scope>
    <source>
        <strain>SL476</strain>
    </source>
</reference>
<feature type="chain" id="PRO_1000092348" description="Hydroxylamine reductase">
    <location>
        <begin position="1"/>
        <end position="550"/>
    </location>
</feature>
<feature type="binding site" evidence="1">
    <location>
        <position position="3"/>
    </location>
    <ligand>
        <name>[2Fe-2S] cluster</name>
        <dbReference type="ChEBI" id="CHEBI:190135"/>
    </ligand>
</feature>
<feature type="binding site" evidence="1">
    <location>
        <position position="6"/>
    </location>
    <ligand>
        <name>[2Fe-2S] cluster</name>
        <dbReference type="ChEBI" id="CHEBI:190135"/>
    </ligand>
</feature>
<feature type="binding site" evidence="1">
    <location>
        <position position="18"/>
    </location>
    <ligand>
        <name>[2Fe-2S] cluster</name>
        <dbReference type="ChEBI" id="CHEBI:190135"/>
    </ligand>
</feature>
<feature type="binding site" evidence="1">
    <location>
        <position position="25"/>
    </location>
    <ligand>
        <name>[2Fe-2S] cluster</name>
        <dbReference type="ChEBI" id="CHEBI:190135"/>
    </ligand>
</feature>
<feature type="binding site" evidence="1">
    <location>
        <position position="249"/>
    </location>
    <ligand>
        <name>hybrid [4Fe-2O-2S] cluster</name>
        <dbReference type="ChEBI" id="CHEBI:60519"/>
    </ligand>
</feature>
<feature type="binding site" evidence="1">
    <location>
        <position position="273"/>
    </location>
    <ligand>
        <name>hybrid [4Fe-2O-2S] cluster</name>
        <dbReference type="ChEBI" id="CHEBI:60519"/>
    </ligand>
</feature>
<feature type="binding site" evidence="1">
    <location>
        <position position="317"/>
    </location>
    <ligand>
        <name>hybrid [4Fe-2O-2S] cluster</name>
        <dbReference type="ChEBI" id="CHEBI:60519"/>
    </ligand>
</feature>
<feature type="binding site" description="via persulfide group" evidence="1">
    <location>
        <position position="405"/>
    </location>
    <ligand>
        <name>hybrid [4Fe-2O-2S] cluster</name>
        <dbReference type="ChEBI" id="CHEBI:60519"/>
    </ligand>
</feature>
<feature type="binding site" evidence="1">
    <location>
        <position position="433"/>
    </location>
    <ligand>
        <name>hybrid [4Fe-2O-2S] cluster</name>
        <dbReference type="ChEBI" id="CHEBI:60519"/>
    </ligand>
</feature>
<feature type="binding site" evidence="1">
    <location>
        <position position="458"/>
    </location>
    <ligand>
        <name>hybrid [4Fe-2O-2S] cluster</name>
        <dbReference type="ChEBI" id="CHEBI:60519"/>
    </ligand>
</feature>
<feature type="binding site" evidence="1">
    <location>
        <position position="492"/>
    </location>
    <ligand>
        <name>hybrid [4Fe-2O-2S] cluster</name>
        <dbReference type="ChEBI" id="CHEBI:60519"/>
    </ligand>
</feature>
<feature type="binding site" evidence="1">
    <location>
        <position position="494"/>
    </location>
    <ligand>
        <name>hybrid [4Fe-2O-2S] cluster</name>
        <dbReference type="ChEBI" id="CHEBI:60519"/>
    </ligand>
</feature>
<feature type="modified residue" description="Cysteine persulfide" evidence="1">
    <location>
        <position position="405"/>
    </location>
</feature>
<name>HCP_SALHS</name>
<organism>
    <name type="scientific">Salmonella heidelberg (strain SL476)</name>
    <dbReference type="NCBI Taxonomy" id="454169"/>
    <lineage>
        <taxon>Bacteria</taxon>
        <taxon>Pseudomonadati</taxon>
        <taxon>Pseudomonadota</taxon>
        <taxon>Gammaproteobacteria</taxon>
        <taxon>Enterobacterales</taxon>
        <taxon>Enterobacteriaceae</taxon>
        <taxon>Salmonella</taxon>
    </lineage>
</organism>
<protein>
    <recommendedName>
        <fullName evidence="1">Hydroxylamine reductase</fullName>
        <ecNumber evidence="1">1.7.99.1</ecNumber>
    </recommendedName>
    <alternativeName>
        <fullName evidence="1">Hybrid-cluster protein</fullName>
        <shortName evidence="1">HCP</shortName>
    </alternativeName>
    <alternativeName>
        <fullName evidence="1">Prismane protein</fullName>
    </alternativeName>
</protein>
<dbReference type="EC" id="1.7.99.1" evidence="1"/>
<dbReference type="EMBL" id="CP001120">
    <property type="protein sequence ID" value="ACF67485.1"/>
    <property type="molecule type" value="Genomic_DNA"/>
</dbReference>
<dbReference type="RefSeq" id="WP_000458785.1">
    <property type="nucleotide sequence ID" value="NC_011083.1"/>
</dbReference>
<dbReference type="SMR" id="B4TCZ8"/>
<dbReference type="KEGG" id="seh:SeHA_C1035"/>
<dbReference type="HOGENOM" id="CLU_038344_2_0_6"/>
<dbReference type="Proteomes" id="UP000001866">
    <property type="component" value="Chromosome"/>
</dbReference>
<dbReference type="GO" id="GO:0005737">
    <property type="term" value="C:cytoplasm"/>
    <property type="evidence" value="ECO:0007669"/>
    <property type="project" value="UniProtKB-SubCell"/>
</dbReference>
<dbReference type="GO" id="GO:0051537">
    <property type="term" value="F:2 iron, 2 sulfur cluster binding"/>
    <property type="evidence" value="ECO:0007669"/>
    <property type="project" value="UniProtKB-KW"/>
</dbReference>
<dbReference type="GO" id="GO:0050418">
    <property type="term" value="F:hydroxylamine reductase activity"/>
    <property type="evidence" value="ECO:0007669"/>
    <property type="project" value="UniProtKB-UniRule"/>
</dbReference>
<dbReference type="GO" id="GO:0046872">
    <property type="term" value="F:metal ion binding"/>
    <property type="evidence" value="ECO:0007669"/>
    <property type="project" value="UniProtKB-KW"/>
</dbReference>
<dbReference type="GO" id="GO:0004601">
    <property type="term" value="F:peroxidase activity"/>
    <property type="evidence" value="ECO:0007669"/>
    <property type="project" value="TreeGrafter"/>
</dbReference>
<dbReference type="GO" id="GO:0042542">
    <property type="term" value="P:response to hydrogen peroxide"/>
    <property type="evidence" value="ECO:0007669"/>
    <property type="project" value="TreeGrafter"/>
</dbReference>
<dbReference type="CDD" id="cd01914">
    <property type="entry name" value="HCP"/>
    <property type="match status" value="1"/>
</dbReference>
<dbReference type="FunFam" id="1.20.1270.20:FF:000001">
    <property type="entry name" value="Hydroxylamine reductase"/>
    <property type="match status" value="1"/>
</dbReference>
<dbReference type="FunFam" id="1.20.1270.20:FF:000002">
    <property type="entry name" value="Hydroxylamine reductase"/>
    <property type="match status" value="1"/>
</dbReference>
<dbReference type="FunFam" id="3.40.50.2030:FF:000001">
    <property type="entry name" value="Hydroxylamine reductase"/>
    <property type="match status" value="1"/>
</dbReference>
<dbReference type="FunFam" id="3.40.50.2030:FF:000002">
    <property type="entry name" value="Hydroxylamine reductase"/>
    <property type="match status" value="1"/>
</dbReference>
<dbReference type="Gene3D" id="1.20.1270.20">
    <property type="match status" value="2"/>
</dbReference>
<dbReference type="Gene3D" id="3.40.50.2030">
    <property type="match status" value="2"/>
</dbReference>
<dbReference type="HAMAP" id="MF_00069">
    <property type="entry name" value="Hydroxylam_reduct"/>
    <property type="match status" value="1"/>
</dbReference>
<dbReference type="InterPro" id="IPR004137">
    <property type="entry name" value="HCP/CODH"/>
</dbReference>
<dbReference type="InterPro" id="IPR010048">
    <property type="entry name" value="Hydroxylam_reduct"/>
</dbReference>
<dbReference type="InterPro" id="IPR016099">
    <property type="entry name" value="Prismane-like_a/b-sand"/>
</dbReference>
<dbReference type="InterPro" id="IPR011254">
    <property type="entry name" value="Prismane-like_sf"/>
</dbReference>
<dbReference type="InterPro" id="IPR016100">
    <property type="entry name" value="Prismane_a-bundle"/>
</dbReference>
<dbReference type="NCBIfam" id="TIGR01703">
    <property type="entry name" value="hybrid_clust"/>
    <property type="match status" value="1"/>
</dbReference>
<dbReference type="NCBIfam" id="NF003658">
    <property type="entry name" value="PRK05290.1"/>
    <property type="match status" value="1"/>
</dbReference>
<dbReference type="PANTHER" id="PTHR30109">
    <property type="entry name" value="HYDROXYLAMINE REDUCTASE"/>
    <property type="match status" value="1"/>
</dbReference>
<dbReference type="PANTHER" id="PTHR30109:SF0">
    <property type="entry name" value="HYDROXYLAMINE REDUCTASE"/>
    <property type="match status" value="1"/>
</dbReference>
<dbReference type="Pfam" id="PF03063">
    <property type="entry name" value="Prismane"/>
    <property type="match status" value="1"/>
</dbReference>
<dbReference type="PIRSF" id="PIRSF000076">
    <property type="entry name" value="HCP"/>
    <property type="match status" value="1"/>
</dbReference>
<dbReference type="SUPFAM" id="SSF56821">
    <property type="entry name" value="Prismane protein-like"/>
    <property type="match status" value="1"/>
</dbReference>
<gene>
    <name evidence="1" type="primary">hcp</name>
    <name type="ordered locus">SeHA_C1035</name>
</gene>
<sequence length="550" mass="60102">MFCVQCEQTIRTPAGNGCSYAQGMCGKTAETSDLQDLLIAALQGLSAWAVKAREYGIINHDVDNFAPRAFFSTLTNVNFDSPRIVGYAREAIALREALKAQCLSVDANAHCDNPMADLQLVSDDLGELQRQAAEFTPNKDKAAIGENILGLRLLCLYGLKGAAAYMEHAHVLGQYDNDIYAQYHKIMAWLGTWPADMNALLECAMEIGQMNFKVMSILDAGETTKYGHPTPTQVNVKATEGKCILISGHDLKDLYNLLEQTEGTGVNVYTHGEMLPAHGYPELRKFKHLVGNYGSGWQNQQVEFARFPGPIVMTSNCIIDPTVGSYDDRIWTRSIVGWPGVSHLEGDDFGPVIAQAQQMAGFPYSEIPHLITVGFGRQTLLGAADTLIDLVSREKLRHIFLVGGCDGARGERNYFTDFATSVPDDCLILTLACGKYRFNKLEFGDIEGLPRLVDAGQCNDAYSAIILAVTLAEKLGCGVNDLPLSLVLSWFEQKAIVILLTLLSLGVKNIVTGPTAPGFFTPDLLAILNEKFGLRSVTTVEEDMKQLLSA</sequence>